<organism>
    <name type="scientific">Marinomonas sp. (strain MWYL1)</name>
    <dbReference type="NCBI Taxonomy" id="400668"/>
    <lineage>
        <taxon>Bacteria</taxon>
        <taxon>Pseudomonadati</taxon>
        <taxon>Pseudomonadota</taxon>
        <taxon>Gammaproteobacteria</taxon>
        <taxon>Oceanospirillales</taxon>
        <taxon>Oceanospirillaceae</taxon>
        <taxon>Marinomonas</taxon>
    </lineage>
</organism>
<name>RS8_MARMS</name>
<dbReference type="EMBL" id="CP000749">
    <property type="protein sequence ID" value="ABR73157.1"/>
    <property type="molecule type" value="Genomic_DNA"/>
</dbReference>
<dbReference type="SMR" id="A6W378"/>
<dbReference type="STRING" id="400668.Mmwyl1_4262"/>
<dbReference type="KEGG" id="mmw:Mmwyl1_4262"/>
<dbReference type="eggNOG" id="COG0096">
    <property type="taxonomic scope" value="Bacteria"/>
</dbReference>
<dbReference type="HOGENOM" id="CLU_098428_0_0_6"/>
<dbReference type="OrthoDB" id="9802617at2"/>
<dbReference type="GO" id="GO:1990904">
    <property type="term" value="C:ribonucleoprotein complex"/>
    <property type="evidence" value="ECO:0007669"/>
    <property type="project" value="UniProtKB-KW"/>
</dbReference>
<dbReference type="GO" id="GO:0005840">
    <property type="term" value="C:ribosome"/>
    <property type="evidence" value="ECO:0007669"/>
    <property type="project" value="UniProtKB-KW"/>
</dbReference>
<dbReference type="GO" id="GO:0019843">
    <property type="term" value="F:rRNA binding"/>
    <property type="evidence" value="ECO:0007669"/>
    <property type="project" value="UniProtKB-UniRule"/>
</dbReference>
<dbReference type="GO" id="GO:0003735">
    <property type="term" value="F:structural constituent of ribosome"/>
    <property type="evidence" value="ECO:0007669"/>
    <property type="project" value="InterPro"/>
</dbReference>
<dbReference type="GO" id="GO:0006412">
    <property type="term" value="P:translation"/>
    <property type="evidence" value="ECO:0007669"/>
    <property type="project" value="UniProtKB-UniRule"/>
</dbReference>
<dbReference type="FunFam" id="3.30.1370.30:FF:000002">
    <property type="entry name" value="30S ribosomal protein S8"/>
    <property type="match status" value="1"/>
</dbReference>
<dbReference type="FunFam" id="3.30.1490.10:FF:000001">
    <property type="entry name" value="30S ribosomal protein S8"/>
    <property type="match status" value="1"/>
</dbReference>
<dbReference type="Gene3D" id="3.30.1370.30">
    <property type="match status" value="1"/>
</dbReference>
<dbReference type="Gene3D" id="3.30.1490.10">
    <property type="match status" value="1"/>
</dbReference>
<dbReference type="HAMAP" id="MF_01302_B">
    <property type="entry name" value="Ribosomal_uS8_B"/>
    <property type="match status" value="1"/>
</dbReference>
<dbReference type="InterPro" id="IPR000630">
    <property type="entry name" value="Ribosomal_uS8"/>
</dbReference>
<dbReference type="InterPro" id="IPR047863">
    <property type="entry name" value="Ribosomal_uS8_CS"/>
</dbReference>
<dbReference type="InterPro" id="IPR035987">
    <property type="entry name" value="Ribosomal_uS8_sf"/>
</dbReference>
<dbReference type="NCBIfam" id="NF001109">
    <property type="entry name" value="PRK00136.1"/>
    <property type="match status" value="1"/>
</dbReference>
<dbReference type="PANTHER" id="PTHR11758">
    <property type="entry name" value="40S RIBOSOMAL PROTEIN S15A"/>
    <property type="match status" value="1"/>
</dbReference>
<dbReference type="Pfam" id="PF00410">
    <property type="entry name" value="Ribosomal_S8"/>
    <property type="match status" value="1"/>
</dbReference>
<dbReference type="SUPFAM" id="SSF56047">
    <property type="entry name" value="Ribosomal protein S8"/>
    <property type="match status" value="1"/>
</dbReference>
<dbReference type="PROSITE" id="PS00053">
    <property type="entry name" value="RIBOSOMAL_S8"/>
    <property type="match status" value="1"/>
</dbReference>
<proteinExistence type="inferred from homology"/>
<comment type="function">
    <text evidence="1">One of the primary rRNA binding proteins, it binds directly to 16S rRNA central domain where it helps coordinate assembly of the platform of the 30S subunit.</text>
</comment>
<comment type="subunit">
    <text evidence="1">Part of the 30S ribosomal subunit. Contacts proteins S5 and S12.</text>
</comment>
<comment type="similarity">
    <text evidence="1">Belongs to the universal ribosomal protein uS8 family.</text>
</comment>
<sequence length="130" mass="13965">MSMQDTLADMFTRIRNAQMAAKTSVSMPSSKMKSSIAAVLREEGYVGDFSVDEAVKPTLTIELKYYEGKPVIEQIKRASRPSLRQYKGTSALPKVEAGLGVAIISTSKGVMTDRAARAAGIGGEVICTVF</sequence>
<feature type="chain" id="PRO_1000085928" description="Small ribosomal subunit protein uS8">
    <location>
        <begin position="1"/>
        <end position="130"/>
    </location>
</feature>
<accession>A6W378</accession>
<protein>
    <recommendedName>
        <fullName evidence="1">Small ribosomal subunit protein uS8</fullName>
    </recommendedName>
    <alternativeName>
        <fullName evidence="2">30S ribosomal protein S8</fullName>
    </alternativeName>
</protein>
<keyword id="KW-0687">Ribonucleoprotein</keyword>
<keyword id="KW-0689">Ribosomal protein</keyword>
<keyword id="KW-0694">RNA-binding</keyword>
<keyword id="KW-0699">rRNA-binding</keyword>
<evidence type="ECO:0000255" key="1">
    <source>
        <dbReference type="HAMAP-Rule" id="MF_01302"/>
    </source>
</evidence>
<evidence type="ECO:0000305" key="2"/>
<gene>
    <name evidence="1" type="primary">rpsH</name>
    <name type="ordered locus">Mmwyl1_4262</name>
</gene>
<reference key="1">
    <citation type="submission" date="2007-06" db="EMBL/GenBank/DDBJ databases">
        <title>Complete sequence of Marinomonas sp. MWYL1.</title>
        <authorList>
            <consortium name="US DOE Joint Genome Institute"/>
            <person name="Copeland A."/>
            <person name="Lucas S."/>
            <person name="Lapidus A."/>
            <person name="Barry K."/>
            <person name="Glavina del Rio T."/>
            <person name="Dalin E."/>
            <person name="Tice H."/>
            <person name="Pitluck S."/>
            <person name="Kiss H."/>
            <person name="Brettin T."/>
            <person name="Bruce D."/>
            <person name="Detter J.C."/>
            <person name="Han C."/>
            <person name="Schmutz J."/>
            <person name="Larimer F."/>
            <person name="Land M."/>
            <person name="Hauser L."/>
            <person name="Kyrpides N."/>
            <person name="Kim E."/>
            <person name="Johnston A.W.B."/>
            <person name="Todd J.D."/>
            <person name="Rogers R."/>
            <person name="Wexler M."/>
            <person name="Bond P.L."/>
            <person name="Li Y."/>
            <person name="Richardson P."/>
        </authorList>
    </citation>
    <scope>NUCLEOTIDE SEQUENCE [LARGE SCALE GENOMIC DNA]</scope>
    <source>
        <strain>MWYL1</strain>
    </source>
</reference>